<protein>
    <recommendedName>
        <fullName evidence="1">Heme-degrading monooxygenase</fullName>
        <ecNumber evidence="1">1.14.14.18</ecNumber>
    </recommendedName>
    <alternativeName>
        <fullName evidence="1">Heme oxygenase</fullName>
    </alternativeName>
    <alternativeName>
        <fullName evidence="1">Iron-regulated surface determinant</fullName>
    </alternativeName>
    <alternativeName>
        <fullName evidence="1">Iron-responsive surface determinant</fullName>
    </alternativeName>
</protein>
<feature type="chain" id="PRO_1000165180" description="Heme-degrading monooxygenase">
    <location>
        <begin position="1"/>
        <end position="107"/>
    </location>
</feature>
<feature type="domain" description="ABM" evidence="1">
    <location>
        <begin position="2"/>
        <end position="94"/>
    </location>
</feature>
<feature type="binding site" evidence="1">
    <location>
        <position position="6"/>
    </location>
    <ligand>
        <name>Fe cation</name>
        <dbReference type="ChEBI" id="CHEBI:24875"/>
    </ligand>
</feature>
<feature type="binding site" description="axial binding residue" evidence="1">
    <location>
        <position position="76"/>
    </location>
    <ligand>
        <name>heme</name>
        <dbReference type="ChEBI" id="CHEBI:30413"/>
    </ligand>
    <ligandPart>
        <name>Fe</name>
        <dbReference type="ChEBI" id="CHEBI:18248"/>
    </ligandPart>
</feature>
<feature type="site" description="Transition state stabilizer" evidence="1">
    <location>
        <position position="66"/>
    </location>
</feature>
<proteinExistence type="inferred from homology"/>
<keyword id="KW-0963">Cytoplasm</keyword>
<keyword id="KW-0349">Heme</keyword>
<keyword id="KW-0408">Iron</keyword>
<keyword id="KW-0479">Metal-binding</keyword>
<keyword id="KW-0503">Monooxygenase</keyword>
<keyword id="KW-0560">Oxidoreductase</keyword>
<accession>B9J044</accession>
<dbReference type="EC" id="1.14.14.18" evidence="1"/>
<dbReference type="EMBL" id="CP000227">
    <property type="protein sequence ID" value="ACM14774.1"/>
    <property type="molecule type" value="Genomic_DNA"/>
</dbReference>
<dbReference type="SMR" id="B9J044"/>
<dbReference type="KEGG" id="bcq:BCQ_4348"/>
<dbReference type="HOGENOM" id="CLU_141544_2_1_9"/>
<dbReference type="Proteomes" id="UP000000441">
    <property type="component" value="Chromosome"/>
</dbReference>
<dbReference type="GO" id="GO:0005737">
    <property type="term" value="C:cytoplasm"/>
    <property type="evidence" value="ECO:0007669"/>
    <property type="project" value="UniProtKB-SubCell"/>
</dbReference>
<dbReference type="GO" id="GO:0020037">
    <property type="term" value="F:heme binding"/>
    <property type="evidence" value="ECO:0007669"/>
    <property type="project" value="UniProtKB-UniRule"/>
</dbReference>
<dbReference type="GO" id="GO:0004392">
    <property type="term" value="F:heme oxygenase (decyclizing) activity"/>
    <property type="evidence" value="ECO:0007669"/>
    <property type="project" value="UniProtKB-UniRule"/>
</dbReference>
<dbReference type="GO" id="GO:0005506">
    <property type="term" value="F:iron ion binding"/>
    <property type="evidence" value="ECO:0007669"/>
    <property type="project" value="UniProtKB-UniRule"/>
</dbReference>
<dbReference type="GO" id="GO:0042167">
    <property type="term" value="P:heme catabolic process"/>
    <property type="evidence" value="ECO:0007669"/>
    <property type="project" value="UniProtKB-UniRule"/>
</dbReference>
<dbReference type="GO" id="GO:0033212">
    <property type="term" value="P:iron import into cell"/>
    <property type="evidence" value="ECO:0007669"/>
    <property type="project" value="InterPro"/>
</dbReference>
<dbReference type="Gene3D" id="3.30.70.100">
    <property type="match status" value="1"/>
</dbReference>
<dbReference type="HAMAP" id="MF_01272">
    <property type="entry name" value="Heme_degrading_monooxygenase"/>
    <property type="match status" value="1"/>
</dbReference>
<dbReference type="InterPro" id="IPR007138">
    <property type="entry name" value="ABM_dom"/>
</dbReference>
<dbReference type="InterPro" id="IPR011008">
    <property type="entry name" value="Dimeric_a/b-barrel"/>
</dbReference>
<dbReference type="InterPro" id="IPR050404">
    <property type="entry name" value="Heme-degrading_MO"/>
</dbReference>
<dbReference type="InterPro" id="IPR023953">
    <property type="entry name" value="IsdG"/>
</dbReference>
<dbReference type="NCBIfam" id="NF009839">
    <property type="entry name" value="PRK13314.1"/>
    <property type="match status" value="1"/>
</dbReference>
<dbReference type="PANTHER" id="PTHR34474:SF4">
    <property type="entry name" value="HEME OXYGENASE (STAPHYLOBILIN-PRODUCING) 1"/>
    <property type="match status" value="1"/>
</dbReference>
<dbReference type="PANTHER" id="PTHR34474">
    <property type="entry name" value="SIGNAL TRANSDUCTION PROTEIN TRAP"/>
    <property type="match status" value="1"/>
</dbReference>
<dbReference type="Pfam" id="PF03992">
    <property type="entry name" value="ABM"/>
    <property type="match status" value="1"/>
</dbReference>
<dbReference type="SUPFAM" id="SSF54909">
    <property type="entry name" value="Dimeric alpha+beta barrel"/>
    <property type="match status" value="1"/>
</dbReference>
<dbReference type="PROSITE" id="PS51725">
    <property type="entry name" value="ABM"/>
    <property type="match status" value="1"/>
</dbReference>
<sequence>MIIVTNTAKITKGNGHKLIDRFNKVGQVETMPGFLGLEVLLTQNTVDYDEVTISTRWNAKEDFQGWTKSPAFKAAHSHQGGMPDYILDNKISYYDVKVVRMPMAAAQ</sequence>
<evidence type="ECO:0000255" key="1">
    <source>
        <dbReference type="HAMAP-Rule" id="MF_01272"/>
    </source>
</evidence>
<organism>
    <name type="scientific">Bacillus cereus (strain Q1)</name>
    <dbReference type="NCBI Taxonomy" id="361100"/>
    <lineage>
        <taxon>Bacteria</taxon>
        <taxon>Bacillati</taxon>
        <taxon>Bacillota</taxon>
        <taxon>Bacilli</taxon>
        <taxon>Bacillales</taxon>
        <taxon>Bacillaceae</taxon>
        <taxon>Bacillus</taxon>
        <taxon>Bacillus cereus group</taxon>
    </lineage>
</organism>
<comment type="function">
    <text evidence="1">Allows bacterial pathogens to use the host heme as an iron source. Catalyzes the oxidative degradation of the heme macrocyclic porphyrin ring to the biliverdin in the presence of a suitable electron donor such as ascorbate or NADPH--cytochrome P450 reductase, with subsequent release of free iron.</text>
</comment>
<comment type="catalytic activity">
    <reaction evidence="1">
        <text>heme b + 3 reduced [NADPH--hemoprotein reductase] + 3 O2 = biliverdin IXalpha + CO + Fe(2+) + 3 oxidized [NADPH--hemoprotein reductase] + 3 H2O + H(+)</text>
        <dbReference type="Rhea" id="RHEA:21764"/>
        <dbReference type="Rhea" id="RHEA-COMP:11964"/>
        <dbReference type="Rhea" id="RHEA-COMP:11965"/>
        <dbReference type="ChEBI" id="CHEBI:15377"/>
        <dbReference type="ChEBI" id="CHEBI:15378"/>
        <dbReference type="ChEBI" id="CHEBI:15379"/>
        <dbReference type="ChEBI" id="CHEBI:17245"/>
        <dbReference type="ChEBI" id="CHEBI:29033"/>
        <dbReference type="ChEBI" id="CHEBI:57618"/>
        <dbReference type="ChEBI" id="CHEBI:57991"/>
        <dbReference type="ChEBI" id="CHEBI:58210"/>
        <dbReference type="ChEBI" id="CHEBI:60344"/>
        <dbReference type="EC" id="1.14.14.18"/>
    </reaction>
</comment>
<comment type="subunit">
    <text evidence="1">Homodimer.</text>
</comment>
<comment type="subcellular location">
    <subcellularLocation>
        <location evidence="1">Cytoplasm</location>
    </subcellularLocation>
</comment>
<comment type="similarity">
    <text evidence="1">Belongs to the antibiotic biosynthesis monooxygenase family. Heme-degrading monooxygenase IsdG subfamily.</text>
</comment>
<name>HDOX_BACCQ</name>
<reference key="1">
    <citation type="journal article" date="2009" name="J. Bacteriol.">
        <title>Complete genome sequence of the extremophilic Bacillus cereus strain Q1 with industrial applications.</title>
        <authorList>
            <person name="Xiong Z."/>
            <person name="Jiang Y."/>
            <person name="Qi D."/>
            <person name="Lu H."/>
            <person name="Yang F."/>
            <person name="Yang J."/>
            <person name="Chen L."/>
            <person name="Sun L."/>
            <person name="Xu X."/>
            <person name="Xue Y."/>
            <person name="Zhu Y."/>
            <person name="Jin Q."/>
        </authorList>
    </citation>
    <scope>NUCLEOTIDE SEQUENCE [LARGE SCALE GENOMIC DNA]</scope>
    <source>
        <strain>Q1</strain>
    </source>
</reference>
<gene>
    <name evidence="1" type="primary">isdG</name>
    <name type="ordered locus">BCQ_4348</name>
</gene>